<evidence type="ECO:0000255" key="1">
    <source>
        <dbReference type="HAMAP-Rule" id="MF_00125"/>
    </source>
</evidence>
<organism>
    <name type="scientific">Bacillus licheniformis (strain ATCC 14580 / DSM 13 / JCM 2505 / CCUG 7422 / NBRC 12200 / NCIMB 9375 / NCTC 10341 / NRRL NRS-1264 / Gibson 46)</name>
    <dbReference type="NCBI Taxonomy" id="279010"/>
    <lineage>
        <taxon>Bacteria</taxon>
        <taxon>Bacillati</taxon>
        <taxon>Bacillota</taxon>
        <taxon>Bacilli</taxon>
        <taxon>Bacillales</taxon>
        <taxon>Bacillaceae</taxon>
        <taxon>Bacillus</taxon>
    </lineage>
</organism>
<keyword id="KW-0028">Amino-acid biosynthesis</keyword>
<keyword id="KW-0963">Cytoplasm</keyword>
<keyword id="KW-0368">Histidine biosynthesis</keyword>
<keyword id="KW-1185">Reference proteome</keyword>
<dbReference type="EMBL" id="AE017333">
    <property type="protein sequence ID" value="AAU42557.1"/>
    <property type="molecule type" value="Genomic_DNA"/>
</dbReference>
<dbReference type="EMBL" id="CP000002">
    <property type="protein sequence ID" value="AAU25186.2"/>
    <property type="molecule type" value="Genomic_DNA"/>
</dbReference>
<dbReference type="RefSeq" id="WP_009329644.1">
    <property type="nucleotide sequence ID" value="NC_006322.1"/>
</dbReference>
<dbReference type="SMR" id="Q65EF7"/>
<dbReference type="STRING" id="279010.BL03406"/>
<dbReference type="KEGG" id="bld:BLi03738"/>
<dbReference type="KEGG" id="bli:BL03406"/>
<dbReference type="eggNOG" id="COG3705">
    <property type="taxonomic scope" value="Bacteria"/>
</dbReference>
<dbReference type="HOGENOM" id="CLU_025113_0_0_9"/>
<dbReference type="UniPathway" id="UPA00031">
    <property type="reaction ID" value="UER00006"/>
</dbReference>
<dbReference type="Proteomes" id="UP000000606">
    <property type="component" value="Chromosome"/>
</dbReference>
<dbReference type="GO" id="GO:0005737">
    <property type="term" value="C:cytoplasm"/>
    <property type="evidence" value="ECO:0007669"/>
    <property type="project" value="UniProtKB-SubCell"/>
</dbReference>
<dbReference type="GO" id="GO:0140096">
    <property type="term" value="F:catalytic activity, acting on a protein"/>
    <property type="evidence" value="ECO:0007669"/>
    <property type="project" value="UniProtKB-ARBA"/>
</dbReference>
<dbReference type="GO" id="GO:0004821">
    <property type="term" value="F:histidine-tRNA ligase activity"/>
    <property type="evidence" value="ECO:0007669"/>
    <property type="project" value="InterPro"/>
</dbReference>
<dbReference type="GO" id="GO:0016740">
    <property type="term" value="F:transferase activity"/>
    <property type="evidence" value="ECO:0007669"/>
    <property type="project" value="UniProtKB-ARBA"/>
</dbReference>
<dbReference type="GO" id="GO:0006427">
    <property type="term" value="P:histidyl-tRNA aminoacylation"/>
    <property type="evidence" value="ECO:0007669"/>
    <property type="project" value="InterPro"/>
</dbReference>
<dbReference type="GO" id="GO:0000105">
    <property type="term" value="P:L-histidine biosynthetic process"/>
    <property type="evidence" value="ECO:0007669"/>
    <property type="project" value="UniProtKB-UniRule"/>
</dbReference>
<dbReference type="CDD" id="cd00773">
    <property type="entry name" value="HisRS-like_core"/>
    <property type="match status" value="1"/>
</dbReference>
<dbReference type="Gene3D" id="3.40.50.12590">
    <property type="match status" value="1"/>
</dbReference>
<dbReference type="Gene3D" id="3.30.930.10">
    <property type="entry name" value="Bira Bifunctional Protein, Domain 2"/>
    <property type="match status" value="1"/>
</dbReference>
<dbReference type="HAMAP" id="MF_00125">
    <property type="entry name" value="HisZ"/>
    <property type="match status" value="1"/>
</dbReference>
<dbReference type="InterPro" id="IPR006195">
    <property type="entry name" value="aa-tRNA-synth_II"/>
</dbReference>
<dbReference type="InterPro" id="IPR045864">
    <property type="entry name" value="aa-tRNA-synth_II/BPL/LPL"/>
</dbReference>
<dbReference type="InterPro" id="IPR041715">
    <property type="entry name" value="HisRS-like_core"/>
</dbReference>
<dbReference type="InterPro" id="IPR004516">
    <property type="entry name" value="HisRS/HisZ"/>
</dbReference>
<dbReference type="InterPro" id="IPR004517">
    <property type="entry name" value="HisZ"/>
</dbReference>
<dbReference type="InterPro" id="IPR053846">
    <property type="entry name" value="HisZ-C"/>
</dbReference>
<dbReference type="NCBIfam" id="TIGR00443">
    <property type="entry name" value="hisZ_biosyn_reg"/>
    <property type="match status" value="1"/>
</dbReference>
<dbReference type="NCBIfam" id="NF008941">
    <property type="entry name" value="PRK12292.2-4"/>
    <property type="match status" value="1"/>
</dbReference>
<dbReference type="PANTHER" id="PTHR43707:SF1">
    <property type="entry name" value="HISTIDINE--TRNA LIGASE, MITOCHONDRIAL-RELATED"/>
    <property type="match status" value="1"/>
</dbReference>
<dbReference type="PANTHER" id="PTHR43707">
    <property type="entry name" value="HISTIDYL-TRNA SYNTHETASE"/>
    <property type="match status" value="1"/>
</dbReference>
<dbReference type="Pfam" id="PF21996">
    <property type="entry name" value="HisZ-like"/>
    <property type="match status" value="1"/>
</dbReference>
<dbReference type="Pfam" id="PF13393">
    <property type="entry name" value="tRNA-synt_His"/>
    <property type="match status" value="1"/>
</dbReference>
<dbReference type="PIRSF" id="PIRSF001549">
    <property type="entry name" value="His-tRNA_synth"/>
    <property type="match status" value="1"/>
</dbReference>
<dbReference type="SUPFAM" id="SSF55681">
    <property type="entry name" value="Class II aaRS and biotin synthetases"/>
    <property type="match status" value="1"/>
</dbReference>
<dbReference type="PROSITE" id="PS50862">
    <property type="entry name" value="AA_TRNA_LIGASE_II"/>
    <property type="match status" value="1"/>
</dbReference>
<proteinExistence type="inferred from homology"/>
<feature type="chain" id="PRO_0000242821" description="ATP phosphoribosyltransferase regulatory subunit">
    <location>
        <begin position="1"/>
        <end position="391"/>
    </location>
</feature>
<comment type="function">
    <text evidence="1">Required for the first step of histidine biosynthesis. May allow the feedback regulation of ATP phosphoribosyltransferase activity by histidine.</text>
</comment>
<comment type="pathway">
    <text evidence="1">Amino-acid biosynthesis; L-histidine biosynthesis; L-histidine from 5-phospho-alpha-D-ribose 1-diphosphate: step 1/9.</text>
</comment>
<comment type="subunit">
    <text evidence="1">Heteromultimer composed of HisG and HisZ subunits.</text>
</comment>
<comment type="subcellular location">
    <subcellularLocation>
        <location evidence="1">Cytoplasm</location>
    </subcellularLocation>
</comment>
<comment type="miscellaneous">
    <text>This function is generally fulfilled by the C-terminal part of HisG, which is missing in some bacteria such as this one.</text>
</comment>
<comment type="similarity">
    <text evidence="1">Belongs to the class-II aminoacyl-tRNA synthetase family. HisZ subfamily.</text>
</comment>
<name>HISZ_BACLD</name>
<reference key="1">
    <citation type="journal article" date="2004" name="J. Mol. Microbiol. Biotechnol.">
        <title>The complete genome sequence of Bacillus licheniformis DSM13, an organism with great industrial potential.</title>
        <authorList>
            <person name="Veith B."/>
            <person name="Herzberg C."/>
            <person name="Steckel S."/>
            <person name="Feesche J."/>
            <person name="Maurer K.H."/>
            <person name="Ehrenreich P."/>
            <person name="Baeumer S."/>
            <person name="Henne A."/>
            <person name="Liesegang H."/>
            <person name="Merkl R."/>
            <person name="Ehrenreich A."/>
            <person name="Gottschalk G."/>
        </authorList>
    </citation>
    <scope>NUCLEOTIDE SEQUENCE [LARGE SCALE GENOMIC DNA]</scope>
    <source>
        <strain>ATCC 14580 / DSM 13 / JCM 2505 / CCUG 7422 / NBRC 12200 / NCIMB 9375 / NCTC 10341 / NRRL NRS-1264 / Gibson 46</strain>
    </source>
</reference>
<reference key="2">
    <citation type="journal article" date="2004" name="Genome Biol.">
        <title>Complete genome sequence of the industrial bacterium Bacillus licheniformis and comparisons with closely related Bacillus species.</title>
        <authorList>
            <person name="Rey M.W."/>
            <person name="Ramaiya P."/>
            <person name="Nelson B.A."/>
            <person name="Brody-Karpin S.D."/>
            <person name="Zaretsky E.J."/>
            <person name="Tang M."/>
            <person name="Lopez de Leon A."/>
            <person name="Xiang H."/>
            <person name="Gusti V."/>
            <person name="Clausen I.G."/>
            <person name="Olsen P.B."/>
            <person name="Rasmussen M.D."/>
            <person name="Andersen J.T."/>
            <person name="Joergensen P.L."/>
            <person name="Larsen T.S."/>
            <person name="Sorokin A."/>
            <person name="Bolotin A."/>
            <person name="Lapidus A."/>
            <person name="Galleron N."/>
            <person name="Ehrlich S.D."/>
            <person name="Berka R.M."/>
        </authorList>
    </citation>
    <scope>NUCLEOTIDE SEQUENCE [LARGE SCALE GENOMIC DNA]</scope>
    <source>
        <strain>ATCC 14580 / DSM 13 / JCM 2505 / CCUG 7422 / NBRC 12200 / NCIMB 9375 / NCTC 10341 / NRRL NRS-1264 / Gibson 46</strain>
    </source>
</reference>
<accession>Q65EF7</accession>
<accession>Q62PX5</accession>
<sequence>MFMFEKPHGMRDTLPMLYETKKKVRSSLTEVMALWGYQFMETPALEFYDTVGVQSAILDQQLFKLLDQEGQTLVLRPDMTAPIARVAASKLHKDDHPLRVGYAANVFRAQEREGGRPAEFEQVGVELIGDGSTSADAEVIALVIFSLKNAGLTSFKISIGHVGILDALFVEVLGNEERAHVLRRYLYEKNYVGYREHVKSLNLSSIDKSRLLELLELRGGIETCSRAASIVDSEKGKRAVLELETLWETLGDYGCTDDIKLDLGMVSHMSYYTGVLFEIYAENVGFPIGNGGRYDQLLGRFDSPAPATGFGIRTDRLLEALKPAEEQEKIDVVIFSTEQRKEAIRFAEEERRKGKKVVMQDLAGIGDIDQMTKSFQNVTYFIGARKEEKHG</sequence>
<protein>
    <recommendedName>
        <fullName evidence="1">ATP phosphoribosyltransferase regulatory subunit</fullName>
    </recommendedName>
</protein>
<gene>
    <name evidence="1" type="primary">hisZ</name>
    <name type="ordered locus">BLi03738</name>
    <name type="ordered locus">BL03406</name>
</gene>